<proteinExistence type="predicted"/>
<keyword id="KW-0472">Membrane</keyword>
<keyword id="KW-1185">Reference proteome</keyword>
<keyword id="KW-0812">Transmembrane</keyword>
<keyword id="KW-1133">Transmembrane helix</keyword>
<dbReference type="EMBL" id="Z48055">
    <property type="protein sequence ID" value="CAA88133.2"/>
    <property type="molecule type" value="Genomic_DNA"/>
</dbReference>
<dbReference type="PIR" id="T24632">
    <property type="entry name" value="T24632"/>
</dbReference>
<dbReference type="RefSeq" id="NP_499278.2">
    <property type="nucleotide sequence ID" value="NM_066877.5"/>
</dbReference>
<dbReference type="FunCoup" id="Q10044">
    <property type="interactions" value="976"/>
</dbReference>
<dbReference type="STRING" id="6239.T07A5.1.1"/>
<dbReference type="PaxDb" id="6239-T07A5.1"/>
<dbReference type="EnsemblMetazoa" id="T07A5.1.1">
    <property type="protein sequence ID" value="T07A5.1.1"/>
    <property type="gene ID" value="WBGene00011554"/>
</dbReference>
<dbReference type="GeneID" id="188207"/>
<dbReference type="KEGG" id="cel:CELE_T07A5.1"/>
<dbReference type="UCSC" id="T07A5.1">
    <property type="organism name" value="c. elegans"/>
</dbReference>
<dbReference type="AGR" id="WB:WBGene00011554"/>
<dbReference type="CTD" id="188207"/>
<dbReference type="WormBase" id="T07A5.1">
    <property type="protein sequence ID" value="CE41335"/>
    <property type="gene ID" value="WBGene00011554"/>
</dbReference>
<dbReference type="eggNOG" id="ENOG502QUDN">
    <property type="taxonomic scope" value="Eukaryota"/>
</dbReference>
<dbReference type="GeneTree" id="ENSGT00390000014471"/>
<dbReference type="HOGENOM" id="CLU_041832_0_0_1"/>
<dbReference type="InParanoid" id="Q10044"/>
<dbReference type="OMA" id="PHPTANF"/>
<dbReference type="OrthoDB" id="444255at2759"/>
<dbReference type="PhylomeDB" id="Q10044"/>
<dbReference type="PRO" id="PR:Q10044"/>
<dbReference type="Proteomes" id="UP000001940">
    <property type="component" value="Chromosome III"/>
</dbReference>
<dbReference type="Bgee" id="WBGene00011554">
    <property type="expression patterns" value="Expressed in adult organism and 1 other cell type or tissue"/>
</dbReference>
<dbReference type="GO" id="GO:0016020">
    <property type="term" value="C:membrane"/>
    <property type="evidence" value="ECO:0007669"/>
    <property type="project" value="UniProtKB-SubCell"/>
</dbReference>
<dbReference type="GO" id="GO:0006486">
    <property type="term" value="P:protein glycosylation"/>
    <property type="evidence" value="ECO:0000318"/>
    <property type="project" value="GO_Central"/>
</dbReference>
<dbReference type="InterPro" id="IPR009644">
    <property type="entry name" value="FKTN-rel"/>
</dbReference>
<dbReference type="InterPro" id="IPR007074">
    <property type="entry name" value="LicD/FKTN/FKRP_NTP_transf"/>
</dbReference>
<dbReference type="PANTHER" id="PTHR15407">
    <property type="entry name" value="FUKUTIN-RELATED"/>
    <property type="match status" value="1"/>
</dbReference>
<dbReference type="PANTHER" id="PTHR15407:SF28">
    <property type="entry name" value="RIBITOL-5-PHOSPHATE TRANSFERASE FKTN"/>
    <property type="match status" value="1"/>
</dbReference>
<dbReference type="Pfam" id="PF04991">
    <property type="entry name" value="LicD"/>
    <property type="match status" value="1"/>
</dbReference>
<dbReference type="Pfam" id="PF24413">
    <property type="entry name" value="W02B3_4_N"/>
    <property type="match status" value="1"/>
</dbReference>
<protein>
    <recommendedName>
        <fullName>Uncharacterized protein T07A5.1</fullName>
    </recommendedName>
</protein>
<accession>Q10044</accession>
<reference key="1">
    <citation type="journal article" date="1998" name="Science">
        <title>Genome sequence of the nematode C. elegans: a platform for investigating biology.</title>
        <authorList>
            <consortium name="The C. elegans sequencing consortium"/>
        </authorList>
    </citation>
    <scope>NUCLEOTIDE SEQUENCE [LARGE SCALE GENOMIC DNA]</scope>
    <source>
        <strain>Bristol N2</strain>
    </source>
</reference>
<name>YRT1_CAEEL</name>
<feature type="chain" id="PRO_0000065451" description="Uncharacterized protein T07A5.1">
    <location>
        <begin position="1"/>
        <end position="379"/>
    </location>
</feature>
<feature type="transmembrane region" description="Helical" evidence="1">
    <location>
        <begin position="7"/>
        <end position="27"/>
    </location>
</feature>
<evidence type="ECO:0000255" key="1"/>
<evidence type="ECO:0000305" key="2"/>
<sequence length="379" mass="44023">MNPRLRVYIFAGIFLFIALIILIKIFFEEEKFDVLVVSLDSKEKTSKECLSNLQSVSIPVPALIIDKTVLKAIYQENCEHIFERKIKIGIDKRNWKLIANHNESSIFECIRMENKTSNDYLQFDTQPARAVLKNFNTFSIGNLHIPSNIPLFLKMWERSEIRGCLNLIVHRNMTKSQQFNHGKEAAEKLAEFRDVLLTFNMFAFLNGGTLLGWYRECGFIPHTADIDLAMFAEDFHPEITHFLLSRTSSFQLLRSLGMLNDSYELTVTPKTGYIVNMDLFLMYKDVHKNGSVINWVGGASNDIKYKYTYPAYDPWCAADLHGHLFWVTCSPQKMLVFEYGNLWYEDHPSSQYDWRSTAKNVRTNGLWSDVELKNVSKLY</sequence>
<organism>
    <name type="scientific">Caenorhabditis elegans</name>
    <dbReference type="NCBI Taxonomy" id="6239"/>
    <lineage>
        <taxon>Eukaryota</taxon>
        <taxon>Metazoa</taxon>
        <taxon>Ecdysozoa</taxon>
        <taxon>Nematoda</taxon>
        <taxon>Chromadorea</taxon>
        <taxon>Rhabditida</taxon>
        <taxon>Rhabditina</taxon>
        <taxon>Rhabditomorpha</taxon>
        <taxon>Rhabditoidea</taxon>
        <taxon>Rhabditidae</taxon>
        <taxon>Peloderinae</taxon>
        <taxon>Caenorhabditis</taxon>
    </lineage>
</organism>
<comment type="subcellular location">
    <subcellularLocation>
        <location evidence="2">Membrane</location>
        <topology evidence="2">Single-pass membrane protein</topology>
    </subcellularLocation>
</comment>
<gene>
    <name type="ORF">T07A5.1</name>
</gene>